<evidence type="ECO:0000250" key="1"/>
<evidence type="ECO:0000255" key="2">
    <source>
        <dbReference type="PROSITE-ProRule" id="PRU00681"/>
    </source>
</evidence>
<evidence type="ECO:0000305" key="3"/>
<organism>
    <name type="scientific">Halalkalibacterium halodurans (strain ATCC BAA-125 / DSM 18197 / FERM 7344 / JCM 9153 / C-125)</name>
    <name type="common">Bacillus halodurans</name>
    <dbReference type="NCBI Taxonomy" id="272558"/>
    <lineage>
        <taxon>Bacteria</taxon>
        <taxon>Bacillati</taxon>
        <taxon>Bacillota</taxon>
        <taxon>Bacilli</taxon>
        <taxon>Bacillales</taxon>
        <taxon>Bacillaceae</taxon>
        <taxon>Halalkalibacterium (ex Joshi et al. 2022)</taxon>
    </lineage>
</organism>
<gene>
    <name type="primary">ptsH</name>
    <name type="ordered locus">BH3074</name>
</gene>
<name>PTHP_HALH5</name>
<sequence>MAEKTFTITAETGIHARPATQLVNKAGQYSSEITLEYKGKAVNLKSIMGVMSLGVGKGAQVTIKAEGSDEAEALKGIEEVIKEGLGE</sequence>
<accession>Q9K8D2</accession>
<keyword id="KW-0963">Cytoplasm</keyword>
<keyword id="KW-0597">Phosphoprotein</keyword>
<keyword id="KW-0598">Phosphotransferase system</keyword>
<keyword id="KW-1185">Reference proteome</keyword>
<keyword id="KW-0762">Sugar transport</keyword>
<keyword id="KW-0804">Transcription</keyword>
<keyword id="KW-0805">Transcription regulation</keyword>
<keyword id="KW-0813">Transport</keyword>
<comment type="function">
    <text evidence="1">General (non sugar-specific) component of the phosphoenolpyruvate-dependent sugar phosphotransferase system (sugar PTS). This major carbohydrate active-transport system catalyzes the phosphorylation of incoming sugar substrates concomitantly with their translocation across the cell membrane. The phosphoryl group from phosphoenolpyruvate (PEP) is transferred to the phosphoryl carrier protein HPr by enzyme I. Phospho-HPr then transfers it to the PTS EIIA domain.</text>
</comment>
<comment type="function">
    <text evidence="1">P-Ser-HPr interacts with the catabolite control protein A (CcpA), forming a complex that binds to DNA at the catabolite response elements cre, operator sites preceding a large number of catabolite-regulated genes. Thus, P-Ser-HPr is a corepressor in carbon catabolite repression (CCR), a mechanism that allows bacteria to coordinate and optimize the utilization of available carbon sources. P-Ser-HPr also plays a role in inducer exclusion, in which it probably interacts with several non-PTS permeases and inhibits their transport activity (By similarity).</text>
</comment>
<comment type="activity regulation">
    <text evidence="1">Phosphorylation on Ser-46 inhibits the phosphoryl transfer from enzyme I to HPr.</text>
</comment>
<comment type="subcellular location">
    <subcellularLocation>
        <location evidence="1">Cytoplasm</location>
    </subcellularLocation>
</comment>
<comment type="similarity">
    <text evidence="3">Belongs to the HPr family.</text>
</comment>
<protein>
    <recommendedName>
        <fullName>Phosphocarrier protein HPr</fullName>
    </recommendedName>
    <alternativeName>
        <fullName>Histidine-containing protein</fullName>
    </alternativeName>
</protein>
<proteinExistence type="inferred from homology"/>
<reference key="1">
    <citation type="journal article" date="2000" name="Nucleic Acids Res.">
        <title>Complete genome sequence of the alkaliphilic bacterium Bacillus halodurans and genomic sequence comparison with Bacillus subtilis.</title>
        <authorList>
            <person name="Takami H."/>
            <person name="Nakasone K."/>
            <person name="Takaki Y."/>
            <person name="Maeno G."/>
            <person name="Sasaki R."/>
            <person name="Masui N."/>
            <person name="Fuji F."/>
            <person name="Hirama C."/>
            <person name="Nakamura Y."/>
            <person name="Ogasawara N."/>
            <person name="Kuhara S."/>
            <person name="Horikoshi K."/>
        </authorList>
    </citation>
    <scope>NUCLEOTIDE SEQUENCE [LARGE SCALE GENOMIC DNA]</scope>
    <source>
        <strain>ATCC BAA-125 / DSM 18197 / FERM 7344 / JCM 9153 / C-125</strain>
    </source>
</reference>
<dbReference type="EMBL" id="BA000004">
    <property type="protein sequence ID" value="BAB06793.1"/>
    <property type="molecule type" value="Genomic_DNA"/>
</dbReference>
<dbReference type="PIR" id="B84034">
    <property type="entry name" value="B84034"/>
</dbReference>
<dbReference type="RefSeq" id="WP_010899218.1">
    <property type="nucleotide sequence ID" value="NC_002570.2"/>
</dbReference>
<dbReference type="SMR" id="Q9K8D2"/>
<dbReference type="STRING" id="272558.gene:10728986"/>
<dbReference type="GeneID" id="87598598"/>
<dbReference type="KEGG" id="bha:BH3074"/>
<dbReference type="eggNOG" id="COG1925">
    <property type="taxonomic scope" value="Bacteria"/>
</dbReference>
<dbReference type="HOGENOM" id="CLU_136230_2_1_9"/>
<dbReference type="OrthoDB" id="9809047at2"/>
<dbReference type="Proteomes" id="UP000001258">
    <property type="component" value="Chromosome"/>
</dbReference>
<dbReference type="GO" id="GO:0005737">
    <property type="term" value="C:cytoplasm"/>
    <property type="evidence" value="ECO:0007669"/>
    <property type="project" value="UniProtKB-SubCell"/>
</dbReference>
<dbReference type="GO" id="GO:0009401">
    <property type="term" value="P:phosphoenolpyruvate-dependent sugar phosphotransferase system"/>
    <property type="evidence" value="ECO:0007669"/>
    <property type="project" value="UniProtKB-KW"/>
</dbReference>
<dbReference type="CDD" id="cd00367">
    <property type="entry name" value="PTS-HPr_like"/>
    <property type="match status" value="1"/>
</dbReference>
<dbReference type="Gene3D" id="3.30.1340.10">
    <property type="entry name" value="HPr-like"/>
    <property type="match status" value="1"/>
</dbReference>
<dbReference type="InterPro" id="IPR050399">
    <property type="entry name" value="HPr"/>
</dbReference>
<dbReference type="InterPro" id="IPR000032">
    <property type="entry name" value="HPr-like"/>
</dbReference>
<dbReference type="InterPro" id="IPR035895">
    <property type="entry name" value="HPr-like_sf"/>
</dbReference>
<dbReference type="InterPro" id="IPR001020">
    <property type="entry name" value="PTS_HPr_His_P_site"/>
</dbReference>
<dbReference type="InterPro" id="IPR002114">
    <property type="entry name" value="PTS_HPr_Ser_P_site"/>
</dbReference>
<dbReference type="NCBIfam" id="NF010352">
    <property type="entry name" value="PRK13780.1"/>
    <property type="match status" value="1"/>
</dbReference>
<dbReference type="NCBIfam" id="TIGR01003">
    <property type="entry name" value="PTS_HPr_family"/>
    <property type="match status" value="1"/>
</dbReference>
<dbReference type="PANTHER" id="PTHR33705">
    <property type="entry name" value="PHOSPHOCARRIER PROTEIN HPR"/>
    <property type="match status" value="1"/>
</dbReference>
<dbReference type="PANTHER" id="PTHR33705:SF2">
    <property type="entry name" value="PHOSPHOCARRIER PROTEIN NPR"/>
    <property type="match status" value="1"/>
</dbReference>
<dbReference type="Pfam" id="PF00381">
    <property type="entry name" value="PTS-HPr"/>
    <property type="match status" value="1"/>
</dbReference>
<dbReference type="PRINTS" id="PR00107">
    <property type="entry name" value="PHOSPHOCPHPR"/>
</dbReference>
<dbReference type="SUPFAM" id="SSF55594">
    <property type="entry name" value="HPr-like"/>
    <property type="match status" value="1"/>
</dbReference>
<dbReference type="PROSITE" id="PS51350">
    <property type="entry name" value="PTS_HPR_DOM"/>
    <property type="match status" value="1"/>
</dbReference>
<dbReference type="PROSITE" id="PS00369">
    <property type="entry name" value="PTS_HPR_HIS"/>
    <property type="match status" value="1"/>
</dbReference>
<dbReference type="PROSITE" id="PS00589">
    <property type="entry name" value="PTS_HPR_SER"/>
    <property type="match status" value="1"/>
</dbReference>
<feature type="chain" id="PRO_0000107838" description="Phosphocarrier protein HPr">
    <location>
        <begin position="1"/>
        <end position="87"/>
    </location>
</feature>
<feature type="domain" description="HPr" evidence="2">
    <location>
        <begin position="1"/>
        <end position="87"/>
    </location>
</feature>
<feature type="active site" description="Pros-phosphohistidine intermediate" evidence="2">
    <location>
        <position position="15"/>
    </location>
</feature>
<feature type="modified residue" description="Phosphoserine; by HPrK/P" evidence="2">
    <location>
        <position position="46"/>
    </location>
</feature>